<keyword id="KW-0997">Cell inner membrane</keyword>
<keyword id="KW-1003">Cell membrane</keyword>
<keyword id="KW-0868">Chloride</keyword>
<keyword id="KW-0869">Chloride channel</keyword>
<keyword id="KW-0407">Ion channel</keyword>
<keyword id="KW-0406">Ion transport</keyword>
<keyword id="KW-0472">Membrane</keyword>
<keyword id="KW-1185">Reference proteome</keyword>
<keyword id="KW-0812">Transmembrane</keyword>
<keyword id="KW-1133">Transmembrane helix</keyword>
<keyword id="KW-0813">Transport</keyword>
<keyword id="KW-0851">Voltage-gated channel</keyword>
<organism>
    <name type="scientific">Shigella flexneri</name>
    <dbReference type="NCBI Taxonomy" id="623"/>
    <lineage>
        <taxon>Bacteria</taxon>
        <taxon>Pseudomonadati</taxon>
        <taxon>Pseudomonadota</taxon>
        <taxon>Gammaproteobacteria</taxon>
        <taxon>Enterobacterales</taxon>
        <taxon>Enterobacteriaceae</taxon>
        <taxon>Shigella</taxon>
    </lineage>
</organism>
<gene>
    <name type="primary">clcB</name>
    <name type="ordered locus">SF1613</name>
    <name type="ordered locus">S1745</name>
</gene>
<proteinExistence type="inferred from homology"/>
<comment type="function">
    <text evidence="1">Probably acts as an electrical shunt for an outwardly-directed proton pump that is linked to amino acid decarboxylation, as part of the extreme acid resistance (XAR) response.</text>
</comment>
<comment type="subcellular location">
    <subcellularLocation>
        <location evidence="1">Cell inner membrane</location>
        <topology evidence="1">Multi-pass membrane protein</topology>
    </subcellularLocation>
</comment>
<comment type="similarity">
    <text evidence="3">Belongs to the chloride channel (TC 2.A.49) family. ClcB subfamily.</text>
</comment>
<comment type="sequence caution" evidence="3">
    <conflict type="erroneous initiation">
        <sequence resource="EMBL-CDS" id="AAN43197"/>
    </conflict>
</comment>
<comment type="sequence caution" evidence="3">
    <conflict type="erroneous initiation">
        <sequence resource="EMBL-CDS" id="AAP17085"/>
    </conflict>
</comment>
<feature type="chain" id="PRO_0000094490" description="Voltage-gated ClC-type chloride channel ClcB">
    <location>
        <begin position="1"/>
        <end position="418"/>
    </location>
</feature>
<feature type="topological domain" description="Cytoplasmic" evidence="2">
    <location>
        <begin position="1"/>
        <end position="4"/>
    </location>
</feature>
<feature type="transmembrane region" description="Helical" evidence="2">
    <location>
        <begin position="5"/>
        <end position="25"/>
    </location>
</feature>
<feature type="topological domain" description="Periplasmic" evidence="2">
    <location>
        <begin position="26"/>
        <end position="53"/>
    </location>
</feature>
<feature type="transmembrane region" description="Helical" evidence="2">
    <location>
        <begin position="54"/>
        <end position="74"/>
    </location>
</feature>
<feature type="topological domain" description="Cytoplasmic" evidence="2">
    <location>
        <begin position="75"/>
        <end position="145"/>
    </location>
</feature>
<feature type="transmembrane region" description="Helical" evidence="2">
    <location>
        <begin position="146"/>
        <end position="166"/>
    </location>
</feature>
<feature type="topological domain" description="Periplasmic" evidence="2">
    <location>
        <begin position="167"/>
        <end position="172"/>
    </location>
</feature>
<feature type="transmembrane region" description="Helical" evidence="2">
    <location>
        <begin position="173"/>
        <end position="193"/>
    </location>
</feature>
<feature type="topological domain" description="Cytoplasmic" evidence="2">
    <location>
        <begin position="194"/>
        <end position="221"/>
    </location>
</feature>
<feature type="transmembrane region" description="Helical" evidence="2">
    <location>
        <begin position="222"/>
        <end position="242"/>
    </location>
</feature>
<feature type="topological domain" description="Periplasmic" evidence="2">
    <location>
        <begin position="243"/>
        <end position="257"/>
    </location>
</feature>
<feature type="transmembrane region" description="Helical" evidence="2">
    <location>
        <begin position="258"/>
        <end position="278"/>
    </location>
</feature>
<feature type="topological domain" description="Cytoplasmic" evidence="2">
    <location>
        <begin position="279"/>
        <end position="290"/>
    </location>
</feature>
<feature type="transmembrane region" description="Helical" evidence="2">
    <location>
        <begin position="291"/>
        <end position="311"/>
    </location>
</feature>
<feature type="topological domain" description="Periplasmic" evidence="2">
    <location>
        <begin position="312"/>
        <end position="315"/>
    </location>
</feature>
<feature type="transmembrane region" description="Helical" evidence="2">
    <location>
        <begin position="316"/>
        <end position="336"/>
    </location>
</feature>
<feature type="topological domain" description="Cytoplasmic" evidence="2">
    <location>
        <begin position="337"/>
        <end position="351"/>
    </location>
</feature>
<feature type="transmembrane region" description="Helical" evidence="2">
    <location>
        <begin position="352"/>
        <end position="372"/>
    </location>
</feature>
<feature type="topological domain" description="Periplasmic" evidence="2">
    <location>
        <begin position="373"/>
        <end position="379"/>
    </location>
</feature>
<feature type="transmembrane region" description="Helical" evidence="2">
    <location>
        <begin position="380"/>
        <end position="400"/>
    </location>
</feature>
<feature type="topological domain" description="Cytoplasmic" evidence="2">
    <location>
        <begin position="401"/>
        <end position="418"/>
    </location>
</feature>
<reference key="1">
    <citation type="journal article" date="2002" name="Nucleic Acids Res.">
        <title>Genome sequence of Shigella flexneri 2a: insights into pathogenicity through comparison with genomes of Escherichia coli K12 and O157.</title>
        <authorList>
            <person name="Jin Q."/>
            <person name="Yuan Z."/>
            <person name="Xu J."/>
            <person name="Wang Y."/>
            <person name="Shen Y."/>
            <person name="Lu W."/>
            <person name="Wang J."/>
            <person name="Liu H."/>
            <person name="Yang J."/>
            <person name="Yang F."/>
            <person name="Zhang X."/>
            <person name="Zhang J."/>
            <person name="Yang G."/>
            <person name="Wu H."/>
            <person name="Qu D."/>
            <person name="Dong J."/>
            <person name="Sun L."/>
            <person name="Xue Y."/>
            <person name="Zhao A."/>
            <person name="Gao Y."/>
            <person name="Zhu J."/>
            <person name="Kan B."/>
            <person name="Ding K."/>
            <person name="Chen S."/>
            <person name="Cheng H."/>
            <person name="Yao Z."/>
            <person name="He B."/>
            <person name="Chen R."/>
            <person name="Ma D."/>
            <person name="Qiang B."/>
            <person name="Wen Y."/>
            <person name="Hou Y."/>
            <person name="Yu J."/>
        </authorList>
    </citation>
    <scope>NUCLEOTIDE SEQUENCE [LARGE SCALE GENOMIC DNA]</scope>
    <source>
        <strain>301 / Serotype 2a</strain>
    </source>
</reference>
<reference key="2">
    <citation type="journal article" date="2003" name="Infect. Immun.">
        <title>Complete genome sequence and comparative genomics of Shigella flexneri serotype 2a strain 2457T.</title>
        <authorList>
            <person name="Wei J."/>
            <person name="Goldberg M.B."/>
            <person name="Burland V."/>
            <person name="Venkatesan M.M."/>
            <person name="Deng W."/>
            <person name="Fournier G."/>
            <person name="Mayhew G.F."/>
            <person name="Plunkett G. III"/>
            <person name="Rose D.J."/>
            <person name="Darling A."/>
            <person name="Mau B."/>
            <person name="Perna N.T."/>
            <person name="Payne S.M."/>
            <person name="Runyen-Janecky L.J."/>
            <person name="Zhou S."/>
            <person name="Schwartz D.C."/>
            <person name="Blattner F.R."/>
        </authorList>
    </citation>
    <scope>NUCLEOTIDE SEQUENCE [LARGE SCALE GENOMIC DNA]</scope>
    <source>
        <strain>ATCC 700930 / 2457T / Serotype 2a</strain>
    </source>
</reference>
<name>CLCB_SHIFL</name>
<protein>
    <recommendedName>
        <fullName>Voltage-gated ClC-type chloride channel ClcB</fullName>
    </recommendedName>
</protein>
<sequence>MFRRLLIATVVGILAVFAVAGFRHAMLLLEWLFLNNDSGSLVNAATNLSSWRRLLTPALGGLAAGLLLMGWQKFTQQRPHAPTDYMEALQTDGQFDYAASLVKSLASLLVVTSGSAIGREGAMILLAALAASCFAQRFTPRQEWKLWIACGAAAGMAAAYRAPLAGSLFIAEVLFGTMMLASLGPVIISAIVAWLVSNLINHSDALLYNVQLSVTVQARDYALIISTGVLAGLCGPLLLTLMNACHRGFVSLKLAPPWQLALGGLIVGLLSLFTPAVWGNGYSTVQSFLTAPPLLMIIAGIFLCKLCAVLASSGSGAPGGVFTPTLFIGLAIGMLYGRSLGLWFPDGEEITLLLGLTGMATLLAATTHAPIMSTLMICEMTGEYQLLPGLLIACVIASVISRTLHRDSIYRQHTAQHS</sequence>
<evidence type="ECO:0000250" key="1"/>
<evidence type="ECO:0000255" key="2"/>
<evidence type="ECO:0000305" key="3"/>
<dbReference type="EMBL" id="AE005674">
    <property type="protein sequence ID" value="AAN43197.1"/>
    <property type="status" value="ALT_INIT"/>
    <property type="molecule type" value="Genomic_DNA"/>
</dbReference>
<dbReference type="EMBL" id="AE014073">
    <property type="protein sequence ID" value="AAP17085.1"/>
    <property type="status" value="ALT_INIT"/>
    <property type="molecule type" value="Genomic_DNA"/>
</dbReference>
<dbReference type="RefSeq" id="NP_707490.3">
    <property type="nucleotide sequence ID" value="NC_004337.2"/>
</dbReference>
<dbReference type="SMR" id="P59638"/>
<dbReference type="STRING" id="198214.SF1613"/>
<dbReference type="PaxDb" id="198214-SF1613"/>
<dbReference type="GeneID" id="1024819"/>
<dbReference type="KEGG" id="sfl:SF1613"/>
<dbReference type="KEGG" id="sfx:S1745"/>
<dbReference type="PATRIC" id="fig|198214.7.peg.1906"/>
<dbReference type="HOGENOM" id="CLU_015263_5_2_6"/>
<dbReference type="Proteomes" id="UP000001006">
    <property type="component" value="Chromosome"/>
</dbReference>
<dbReference type="Proteomes" id="UP000002673">
    <property type="component" value="Chromosome"/>
</dbReference>
<dbReference type="GO" id="GO:0034707">
    <property type="term" value="C:chloride channel complex"/>
    <property type="evidence" value="ECO:0007669"/>
    <property type="project" value="UniProtKB-KW"/>
</dbReference>
<dbReference type="GO" id="GO:0005886">
    <property type="term" value="C:plasma membrane"/>
    <property type="evidence" value="ECO:0007669"/>
    <property type="project" value="UniProtKB-SubCell"/>
</dbReference>
<dbReference type="GO" id="GO:0005247">
    <property type="term" value="F:voltage-gated chloride channel activity"/>
    <property type="evidence" value="ECO:0007669"/>
    <property type="project" value="UniProtKB-UniRule"/>
</dbReference>
<dbReference type="GO" id="GO:0010447">
    <property type="term" value="P:response to acidic pH"/>
    <property type="evidence" value="ECO:0007669"/>
    <property type="project" value="InterPro"/>
</dbReference>
<dbReference type="CDD" id="cd00400">
    <property type="entry name" value="Voltage_gated_ClC"/>
    <property type="match status" value="1"/>
</dbReference>
<dbReference type="FunFam" id="1.10.3080.10:FF:000010">
    <property type="entry name" value="Voltage-gated ClC-type chloride channel ClcB"/>
    <property type="match status" value="1"/>
</dbReference>
<dbReference type="Gene3D" id="1.10.3080.10">
    <property type="entry name" value="Clc chloride channel"/>
    <property type="match status" value="1"/>
</dbReference>
<dbReference type="HAMAP" id="MF_01203">
    <property type="entry name" value="CLC_ClcB"/>
    <property type="match status" value="1"/>
</dbReference>
<dbReference type="InterPro" id="IPR014743">
    <property type="entry name" value="Cl-channel_core"/>
</dbReference>
<dbReference type="InterPro" id="IPR023790">
    <property type="entry name" value="Cl-channel_volt-gated_ClcB"/>
</dbReference>
<dbReference type="InterPro" id="IPR001807">
    <property type="entry name" value="ClC"/>
</dbReference>
<dbReference type="InterPro" id="IPR050368">
    <property type="entry name" value="ClC-type_chloride_channel"/>
</dbReference>
<dbReference type="NCBIfam" id="NF002437">
    <property type="entry name" value="PRK01610.1"/>
    <property type="match status" value="1"/>
</dbReference>
<dbReference type="PANTHER" id="PTHR43427">
    <property type="entry name" value="CHLORIDE CHANNEL PROTEIN CLC-E"/>
    <property type="match status" value="1"/>
</dbReference>
<dbReference type="PANTHER" id="PTHR43427:SF6">
    <property type="entry name" value="CHLORIDE CHANNEL PROTEIN CLC-E"/>
    <property type="match status" value="1"/>
</dbReference>
<dbReference type="Pfam" id="PF00654">
    <property type="entry name" value="Voltage_CLC"/>
    <property type="match status" value="1"/>
</dbReference>
<dbReference type="PRINTS" id="PR00762">
    <property type="entry name" value="CLCHANNEL"/>
</dbReference>
<dbReference type="SUPFAM" id="SSF81340">
    <property type="entry name" value="Clc chloride channel"/>
    <property type="match status" value="1"/>
</dbReference>
<accession>P59638</accession>